<evidence type="ECO:0000255" key="1">
    <source>
        <dbReference type="HAMAP-Rule" id="MF_01804"/>
    </source>
</evidence>
<comment type="function">
    <text evidence="1">Participates in chromosomal partition during cell division. May act via the formation of a condensin-like complex containing Smc and ScpA that pull DNA away from mid-cell into both cell halves.</text>
</comment>
<comment type="subunit">
    <text evidence="1">Homodimer. Homodimerization may be required to stabilize the binding of ScpA to the Smc head domains. Component of a cohesin-like complex composed of ScpA, ScpB and the Smc homodimer, in which ScpA and ScpB bind to the head domain of Smc. The presence of the three proteins is required for the association of the complex with DNA.</text>
</comment>
<comment type="subcellular location">
    <subcellularLocation>
        <location evidence="1">Cytoplasm</location>
    </subcellularLocation>
    <text evidence="1">Associated with two foci at the outer edges of the nucleoid region in young cells, and at four foci within both cell halves in older cells.</text>
</comment>
<comment type="similarity">
    <text evidence="1">Belongs to the ScpB family.</text>
</comment>
<proteinExistence type="inferred from homology"/>
<reference key="1">
    <citation type="journal article" date="2008" name="Chem. Biol. Interact.">
        <title>Extending the Bacillus cereus group genomics to putative food-borne pathogens of different toxicity.</title>
        <authorList>
            <person name="Lapidus A."/>
            <person name="Goltsman E."/>
            <person name="Auger S."/>
            <person name="Galleron N."/>
            <person name="Segurens B."/>
            <person name="Dossat C."/>
            <person name="Land M.L."/>
            <person name="Broussolle V."/>
            <person name="Brillard J."/>
            <person name="Guinebretiere M.-H."/>
            <person name="Sanchis V."/>
            <person name="Nguen-the C."/>
            <person name="Lereclus D."/>
            <person name="Richardson P."/>
            <person name="Wincker P."/>
            <person name="Weissenbach J."/>
            <person name="Ehrlich S.D."/>
            <person name="Sorokin A."/>
        </authorList>
    </citation>
    <scope>NUCLEOTIDE SEQUENCE [LARGE SCALE GENOMIC DNA]</scope>
    <source>
        <strain>KBAB4</strain>
    </source>
</reference>
<accession>A9VFG0</accession>
<keyword id="KW-0131">Cell cycle</keyword>
<keyword id="KW-0132">Cell division</keyword>
<keyword id="KW-0159">Chromosome partition</keyword>
<keyword id="KW-0963">Cytoplasm</keyword>
<organism>
    <name type="scientific">Bacillus mycoides (strain KBAB4)</name>
    <name type="common">Bacillus weihenstephanensis</name>
    <dbReference type="NCBI Taxonomy" id="315730"/>
    <lineage>
        <taxon>Bacteria</taxon>
        <taxon>Bacillati</taxon>
        <taxon>Bacillota</taxon>
        <taxon>Bacilli</taxon>
        <taxon>Bacillales</taxon>
        <taxon>Bacillaceae</taxon>
        <taxon>Bacillus</taxon>
        <taxon>Bacillus cereus group</taxon>
    </lineage>
</organism>
<sequence length="190" mass="21371">MDRKEQKAIIEGLLFVAGDEGIYPEQIAKVLEVEVEEVLNSIEEMQKECEGSNRGLQIVQYAKVYRFATKKEHASYYQKLIDTPTAASLSQAALETLAIVAYRQPITRTEMEEIRGVKTDKALQTLVSHLLIKETGRAEGPGRPILYGTTKEFLDTFGLKTLDDLPPLSEENEQMNEADLFFGSLQELSK</sequence>
<feature type="chain" id="PRO_1000187532" description="Segregation and condensation protein B">
    <location>
        <begin position="1"/>
        <end position="190"/>
    </location>
</feature>
<protein>
    <recommendedName>
        <fullName evidence="1">Segregation and condensation protein B</fullName>
    </recommendedName>
</protein>
<name>SCPB_BACMK</name>
<gene>
    <name evidence="1" type="primary">scpB</name>
    <name type="ordered locus">BcerKBAB4_3886</name>
</gene>
<dbReference type="EMBL" id="CP000903">
    <property type="protein sequence ID" value="ABY45054.1"/>
    <property type="molecule type" value="Genomic_DNA"/>
</dbReference>
<dbReference type="RefSeq" id="WP_012261645.1">
    <property type="nucleotide sequence ID" value="NC_010184.1"/>
</dbReference>
<dbReference type="SMR" id="A9VFG0"/>
<dbReference type="KEGG" id="bwe:BcerKBAB4_3886"/>
<dbReference type="eggNOG" id="COG1386">
    <property type="taxonomic scope" value="Bacteria"/>
</dbReference>
<dbReference type="HOGENOM" id="CLU_045647_5_3_9"/>
<dbReference type="Proteomes" id="UP000002154">
    <property type="component" value="Chromosome"/>
</dbReference>
<dbReference type="GO" id="GO:0005737">
    <property type="term" value="C:cytoplasm"/>
    <property type="evidence" value="ECO:0007669"/>
    <property type="project" value="UniProtKB-SubCell"/>
</dbReference>
<dbReference type="GO" id="GO:0051301">
    <property type="term" value="P:cell division"/>
    <property type="evidence" value="ECO:0007669"/>
    <property type="project" value="UniProtKB-KW"/>
</dbReference>
<dbReference type="GO" id="GO:0051304">
    <property type="term" value="P:chromosome separation"/>
    <property type="evidence" value="ECO:0007669"/>
    <property type="project" value="InterPro"/>
</dbReference>
<dbReference type="GO" id="GO:0006260">
    <property type="term" value="P:DNA replication"/>
    <property type="evidence" value="ECO:0007669"/>
    <property type="project" value="UniProtKB-UniRule"/>
</dbReference>
<dbReference type="Gene3D" id="1.10.10.10">
    <property type="entry name" value="Winged helix-like DNA-binding domain superfamily/Winged helix DNA-binding domain"/>
    <property type="match status" value="2"/>
</dbReference>
<dbReference type="HAMAP" id="MF_01804">
    <property type="entry name" value="ScpB"/>
    <property type="match status" value="1"/>
</dbReference>
<dbReference type="InterPro" id="IPR005234">
    <property type="entry name" value="ScpB_csome_segregation"/>
</dbReference>
<dbReference type="InterPro" id="IPR036388">
    <property type="entry name" value="WH-like_DNA-bd_sf"/>
</dbReference>
<dbReference type="InterPro" id="IPR036390">
    <property type="entry name" value="WH_DNA-bd_sf"/>
</dbReference>
<dbReference type="NCBIfam" id="TIGR00281">
    <property type="entry name" value="SMC-Scp complex subunit ScpB"/>
    <property type="match status" value="1"/>
</dbReference>
<dbReference type="PANTHER" id="PTHR34298">
    <property type="entry name" value="SEGREGATION AND CONDENSATION PROTEIN B"/>
    <property type="match status" value="1"/>
</dbReference>
<dbReference type="PANTHER" id="PTHR34298:SF2">
    <property type="entry name" value="SEGREGATION AND CONDENSATION PROTEIN B"/>
    <property type="match status" value="1"/>
</dbReference>
<dbReference type="Pfam" id="PF04079">
    <property type="entry name" value="SMC_ScpB"/>
    <property type="match status" value="1"/>
</dbReference>
<dbReference type="PIRSF" id="PIRSF019345">
    <property type="entry name" value="ScpB"/>
    <property type="match status" value="1"/>
</dbReference>
<dbReference type="SUPFAM" id="SSF46785">
    <property type="entry name" value="Winged helix' DNA-binding domain"/>
    <property type="match status" value="2"/>
</dbReference>